<dbReference type="EMBL" id="CP001392">
    <property type="protein sequence ID" value="ACM32572.1"/>
    <property type="molecule type" value="Genomic_DNA"/>
</dbReference>
<dbReference type="RefSeq" id="WP_011804607.1">
    <property type="nucleotide sequence ID" value="NC_011992.1"/>
</dbReference>
<dbReference type="SMR" id="B9MFY1"/>
<dbReference type="GeneID" id="84682358"/>
<dbReference type="KEGG" id="dia:Dtpsy_1095"/>
<dbReference type="eggNOG" id="COG1923">
    <property type="taxonomic scope" value="Bacteria"/>
</dbReference>
<dbReference type="HOGENOM" id="CLU_113688_2_2_4"/>
<dbReference type="Proteomes" id="UP000000450">
    <property type="component" value="Chromosome"/>
</dbReference>
<dbReference type="GO" id="GO:0005829">
    <property type="term" value="C:cytosol"/>
    <property type="evidence" value="ECO:0007669"/>
    <property type="project" value="TreeGrafter"/>
</dbReference>
<dbReference type="GO" id="GO:0003723">
    <property type="term" value="F:RNA binding"/>
    <property type="evidence" value="ECO:0007669"/>
    <property type="project" value="UniProtKB-UniRule"/>
</dbReference>
<dbReference type="GO" id="GO:0006355">
    <property type="term" value="P:regulation of DNA-templated transcription"/>
    <property type="evidence" value="ECO:0007669"/>
    <property type="project" value="InterPro"/>
</dbReference>
<dbReference type="GO" id="GO:0043487">
    <property type="term" value="P:regulation of RNA stability"/>
    <property type="evidence" value="ECO:0007669"/>
    <property type="project" value="TreeGrafter"/>
</dbReference>
<dbReference type="GO" id="GO:0045974">
    <property type="term" value="P:regulation of translation, ncRNA-mediated"/>
    <property type="evidence" value="ECO:0007669"/>
    <property type="project" value="TreeGrafter"/>
</dbReference>
<dbReference type="CDD" id="cd01716">
    <property type="entry name" value="Hfq"/>
    <property type="match status" value="1"/>
</dbReference>
<dbReference type="FunFam" id="2.30.30.100:FF:000001">
    <property type="entry name" value="RNA-binding protein Hfq"/>
    <property type="match status" value="1"/>
</dbReference>
<dbReference type="Gene3D" id="2.30.30.100">
    <property type="match status" value="1"/>
</dbReference>
<dbReference type="HAMAP" id="MF_00436">
    <property type="entry name" value="Hfq"/>
    <property type="match status" value="1"/>
</dbReference>
<dbReference type="InterPro" id="IPR005001">
    <property type="entry name" value="Hfq"/>
</dbReference>
<dbReference type="InterPro" id="IPR010920">
    <property type="entry name" value="LSM_dom_sf"/>
</dbReference>
<dbReference type="InterPro" id="IPR047575">
    <property type="entry name" value="Sm"/>
</dbReference>
<dbReference type="NCBIfam" id="TIGR02383">
    <property type="entry name" value="Hfq"/>
    <property type="match status" value="1"/>
</dbReference>
<dbReference type="NCBIfam" id="NF001602">
    <property type="entry name" value="PRK00395.1"/>
    <property type="match status" value="1"/>
</dbReference>
<dbReference type="PANTHER" id="PTHR34772">
    <property type="entry name" value="RNA-BINDING PROTEIN HFQ"/>
    <property type="match status" value="1"/>
</dbReference>
<dbReference type="PANTHER" id="PTHR34772:SF1">
    <property type="entry name" value="RNA-BINDING PROTEIN HFQ"/>
    <property type="match status" value="1"/>
</dbReference>
<dbReference type="Pfam" id="PF17209">
    <property type="entry name" value="Hfq"/>
    <property type="match status" value="1"/>
</dbReference>
<dbReference type="SUPFAM" id="SSF50182">
    <property type="entry name" value="Sm-like ribonucleoproteins"/>
    <property type="match status" value="1"/>
</dbReference>
<dbReference type="PROSITE" id="PS52002">
    <property type="entry name" value="SM"/>
    <property type="match status" value="1"/>
</dbReference>
<sequence>MSNKGQLLQDPFLNALRREHVPVSIYLVNGIKLQGQIESFDQYVVLLRNTVTQMVYKHAISTIVPGRAVNFSTAEPAADGDNQ</sequence>
<reference key="1">
    <citation type="submission" date="2009-01" db="EMBL/GenBank/DDBJ databases">
        <title>Complete sequence of Diaphorobacter sp. TPSY.</title>
        <authorList>
            <consortium name="US DOE Joint Genome Institute"/>
            <person name="Lucas S."/>
            <person name="Copeland A."/>
            <person name="Lapidus A."/>
            <person name="Glavina del Rio T."/>
            <person name="Tice H."/>
            <person name="Bruce D."/>
            <person name="Goodwin L."/>
            <person name="Pitluck S."/>
            <person name="Chertkov O."/>
            <person name="Brettin T."/>
            <person name="Detter J.C."/>
            <person name="Han C."/>
            <person name="Larimer F."/>
            <person name="Land M."/>
            <person name="Hauser L."/>
            <person name="Kyrpides N."/>
            <person name="Mikhailova N."/>
            <person name="Coates J.D."/>
        </authorList>
    </citation>
    <scope>NUCLEOTIDE SEQUENCE [LARGE SCALE GENOMIC DNA]</scope>
    <source>
        <strain>TPSY</strain>
    </source>
</reference>
<protein>
    <recommendedName>
        <fullName evidence="1">RNA-binding protein Hfq</fullName>
    </recommendedName>
</protein>
<gene>
    <name evidence="1" type="primary">hfq</name>
    <name type="ordered locus">Dtpsy_1095</name>
</gene>
<organism>
    <name type="scientific">Acidovorax ebreus (strain TPSY)</name>
    <name type="common">Diaphorobacter sp. (strain TPSY)</name>
    <dbReference type="NCBI Taxonomy" id="535289"/>
    <lineage>
        <taxon>Bacteria</taxon>
        <taxon>Pseudomonadati</taxon>
        <taxon>Pseudomonadota</taxon>
        <taxon>Betaproteobacteria</taxon>
        <taxon>Burkholderiales</taxon>
        <taxon>Comamonadaceae</taxon>
        <taxon>Diaphorobacter</taxon>
    </lineage>
</organism>
<keyword id="KW-1185">Reference proteome</keyword>
<keyword id="KW-0694">RNA-binding</keyword>
<keyword id="KW-0346">Stress response</keyword>
<comment type="function">
    <text evidence="1">RNA chaperone that binds small regulatory RNA (sRNAs) and mRNAs to facilitate mRNA translational regulation in response to envelope stress, environmental stress and changes in metabolite concentrations. Also binds with high specificity to tRNAs.</text>
</comment>
<comment type="subunit">
    <text evidence="1">Homohexamer.</text>
</comment>
<comment type="similarity">
    <text evidence="1">Belongs to the Hfq family.</text>
</comment>
<accession>B9MFY1</accession>
<name>HFQ_ACIET</name>
<evidence type="ECO:0000255" key="1">
    <source>
        <dbReference type="HAMAP-Rule" id="MF_00436"/>
    </source>
</evidence>
<evidence type="ECO:0000255" key="2">
    <source>
        <dbReference type="PROSITE-ProRule" id="PRU01346"/>
    </source>
</evidence>
<proteinExistence type="inferred from homology"/>
<feature type="chain" id="PRO_1000135030" description="RNA-binding protein Hfq">
    <location>
        <begin position="1"/>
        <end position="83"/>
    </location>
</feature>
<feature type="domain" description="Sm" evidence="2">
    <location>
        <begin position="10"/>
        <end position="69"/>
    </location>
</feature>